<name>NAR2B_MOUSE</name>
<comment type="function">
    <text evidence="5 6">Has both NAD(+) glycohydrolase and ADP-ribosyltransferase activity.</text>
</comment>
<comment type="catalytic activity">
    <reaction evidence="4 6">
        <text>L-arginyl-[protein] + NAD(+) = N(omega)-(ADP-D-ribosyl)-L-arginyl-[protein] + nicotinamide + H(+)</text>
        <dbReference type="Rhea" id="RHEA:19149"/>
        <dbReference type="Rhea" id="RHEA-COMP:10532"/>
        <dbReference type="Rhea" id="RHEA-COMP:15087"/>
        <dbReference type="ChEBI" id="CHEBI:15378"/>
        <dbReference type="ChEBI" id="CHEBI:17154"/>
        <dbReference type="ChEBI" id="CHEBI:29965"/>
        <dbReference type="ChEBI" id="CHEBI:57540"/>
        <dbReference type="ChEBI" id="CHEBI:142554"/>
        <dbReference type="EC" id="2.4.2.31"/>
    </reaction>
</comment>
<comment type="catalytic activity">
    <reaction evidence="4">
        <text>NAD(+) + H2O = ADP-D-ribose + nicotinamide + H(+)</text>
        <dbReference type="Rhea" id="RHEA:16301"/>
        <dbReference type="ChEBI" id="CHEBI:15377"/>
        <dbReference type="ChEBI" id="CHEBI:15378"/>
        <dbReference type="ChEBI" id="CHEBI:17154"/>
        <dbReference type="ChEBI" id="CHEBI:57540"/>
        <dbReference type="ChEBI" id="CHEBI:57967"/>
        <dbReference type="EC" id="3.2.2.5"/>
    </reaction>
</comment>
<comment type="subcellular location">
    <subcellularLocation>
        <location evidence="1">Cell membrane</location>
        <topology evidence="1">Lipid-anchor</topology>
        <topology evidence="1">GPI-anchor</topology>
    </subcellularLocation>
</comment>
<comment type="tissue specificity">
    <text evidence="6">Expressed in spleen, intestine and thymus.</text>
</comment>
<comment type="similarity">
    <text evidence="7">Belongs to the Arg-specific ADP-ribosyltransferase family.</text>
</comment>
<feature type="signal peptide" evidence="1">
    <location>
        <begin position="1"/>
        <end position="20"/>
    </location>
</feature>
<feature type="chain" id="PRO_0000019321" description="T-cell ecto-ADP-ribosyltransferase 2">
    <location>
        <begin position="21"/>
        <end position="260"/>
    </location>
</feature>
<feature type="propeptide" id="PRO_0000019322" description="Removed in mature form" evidence="1">
    <location>
        <begin position="261"/>
        <end position="289"/>
    </location>
</feature>
<feature type="domain" description="TR mART core" evidence="3">
    <location>
        <begin position="61"/>
        <end position="241"/>
    </location>
</feature>
<feature type="active site" evidence="3">
    <location>
        <position position="146"/>
    </location>
</feature>
<feature type="active site" evidence="3">
    <location>
        <position position="167"/>
    </location>
</feature>
<feature type="active site" evidence="3">
    <location>
        <position position="209"/>
    </location>
</feature>
<feature type="binding site" evidence="1">
    <location>
        <position position="98"/>
    </location>
    <ligand>
        <name>NAD(+)</name>
        <dbReference type="ChEBI" id="CHEBI:57540"/>
    </ligand>
</feature>
<feature type="binding site" evidence="1">
    <location>
        <position position="146"/>
    </location>
    <ligand>
        <name>NAD(+)</name>
        <dbReference type="ChEBI" id="CHEBI:57540"/>
    </ligand>
</feature>
<feature type="binding site" evidence="1">
    <location>
        <position position="164"/>
    </location>
    <ligand>
        <name>NAD(+)</name>
        <dbReference type="ChEBI" id="CHEBI:57540"/>
    </ligand>
</feature>
<feature type="binding site" evidence="1">
    <location>
        <position position="202"/>
    </location>
    <ligand>
        <name>NAD(+)</name>
        <dbReference type="ChEBI" id="CHEBI:57540"/>
    </ligand>
</feature>
<feature type="lipid moiety-binding region" description="GPI-anchor amidated serine" evidence="1">
    <location>
        <position position="260"/>
    </location>
</feature>
<feature type="glycosylation site" description="N-linked (GlcNAc...) asparagine" evidence="2">
    <location>
        <position position="79"/>
    </location>
</feature>
<feature type="glycosylation site" description="N-linked (GlcNAc...) asparagine" evidence="2">
    <location>
        <position position="249"/>
    </location>
</feature>
<feature type="disulfide bond" evidence="1">
    <location>
        <begin position="41"/>
        <end position="246"/>
    </location>
</feature>
<feature type="disulfide bond" evidence="1">
    <location>
        <begin position="141"/>
        <end position="193"/>
    </location>
</feature>
<feature type="mutagenesis site" description="Changes thiol-independent NADase activity to thiol-dependent; when associated with C-201." evidence="4">
    <original>S</original>
    <variation>C</variation>
    <location>
        <position position="80"/>
    </location>
</feature>
<feature type="mutagenesis site" description="Changes thiol-independent NADase activity to thiol-dependent; when associated with C-80." evidence="4">
    <original>F</original>
    <variation>C</variation>
    <location>
        <position position="201"/>
    </location>
</feature>
<feature type="sequence conflict" description="In Ref. 1; CAA60948 and 2; AAB71683/AAB71684." evidence="7" ref="1 2">
    <original>T</original>
    <variation>P</variation>
    <location>
        <position position="2"/>
    </location>
</feature>
<feature type="sequence conflict" description="In Ref. 2; AAB71683/AAB71684." evidence="7" ref="2">
    <original>K</original>
    <variation>N</variation>
    <location>
        <position position="4"/>
    </location>
</feature>
<feature type="sequence conflict" description="In Ref. 1; CAA60948 and 2; AAB71683/AAB71684." evidence="7" ref="1 2">
    <original>I</original>
    <variation>N</variation>
    <location>
        <position position="5"/>
    </location>
</feature>
<feature type="sequence conflict" description="In Ref. 1; CAA60948." evidence="7" ref="1">
    <original>S</original>
    <variation>G</variation>
    <location>
        <position position="40"/>
    </location>
</feature>
<feature type="sequence conflict" description="In Ref. 1; CAA60948." evidence="7" ref="1">
    <original>K</original>
    <variation>I</variation>
    <location>
        <position position="115"/>
    </location>
</feature>
<feature type="sequence conflict" description="In Ref. 1; CAA60948." evidence="7" ref="1">
    <original>E</original>
    <variation>Q</variation>
    <location>
        <position position="231"/>
    </location>
</feature>
<feature type="sequence conflict" description="In Ref. 1; CAA60948 and 2; AAB71683/AAB71684." evidence="7" ref="1 2">
    <original>L</original>
    <variation>P</variation>
    <location>
        <position position="289"/>
    </location>
</feature>
<evidence type="ECO:0000250" key="1"/>
<evidence type="ECO:0000255" key="2"/>
<evidence type="ECO:0000255" key="3">
    <source>
        <dbReference type="PROSITE-ProRule" id="PRU01340"/>
    </source>
</evidence>
<evidence type="ECO:0000269" key="4">
    <source>
    </source>
</evidence>
<evidence type="ECO:0000269" key="5">
    <source>
    </source>
</evidence>
<evidence type="ECO:0000269" key="6">
    <source>
    </source>
</evidence>
<evidence type="ECO:0000305" key="7"/>
<proteinExistence type="evidence at protein level"/>
<dbReference type="EC" id="2.4.2.31" evidence="4 6"/>
<dbReference type="EC" id="3.2.2.5" evidence="4"/>
<dbReference type="EMBL" id="X87612">
    <property type="protein sequence ID" value="CAA60948.1"/>
    <property type="molecule type" value="mRNA"/>
</dbReference>
<dbReference type="EMBL" id="AF016463">
    <property type="protein sequence ID" value="AAB71683.1"/>
    <property type="molecule type" value="mRNA"/>
</dbReference>
<dbReference type="EMBL" id="AF016465">
    <property type="protein sequence ID" value="AAB71684.1"/>
    <property type="molecule type" value="mRNA"/>
</dbReference>
<dbReference type="EMBL" id="AC129609">
    <property type="status" value="NOT_ANNOTATED_CDS"/>
    <property type="molecule type" value="Genomic_DNA"/>
</dbReference>
<dbReference type="CCDS" id="CCDS21512.1"/>
<dbReference type="RefSeq" id="NP_064299.2">
    <property type="nucleotide sequence ID" value="NM_019915.3"/>
</dbReference>
<dbReference type="RefSeq" id="XP_006507319.1">
    <property type="nucleotide sequence ID" value="XM_006507256.4"/>
</dbReference>
<dbReference type="SMR" id="O35975"/>
<dbReference type="FunCoup" id="O35975">
    <property type="interactions" value="62"/>
</dbReference>
<dbReference type="STRING" id="10090.ENSMUSP00000065658"/>
<dbReference type="GlyCosmos" id="O35975">
    <property type="glycosylation" value="2 sites, No reported glycans"/>
</dbReference>
<dbReference type="GlyGen" id="O35975">
    <property type="glycosylation" value="2 sites"/>
</dbReference>
<dbReference type="iPTMnet" id="O35975"/>
<dbReference type="PhosphoSitePlus" id="O35975"/>
<dbReference type="SwissPalm" id="O35975"/>
<dbReference type="PaxDb" id="10090-ENSMUSP00000065658"/>
<dbReference type="ProteomicsDB" id="287438"/>
<dbReference type="DNASU" id="11872"/>
<dbReference type="Ensembl" id="ENSMUST00000063920.3">
    <property type="protein sequence ID" value="ENSMUSP00000065658.3"/>
    <property type="gene ID" value="ENSMUSG00000030651.6"/>
</dbReference>
<dbReference type="GeneID" id="11872"/>
<dbReference type="KEGG" id="mmu:11872"/>
<dbReference type="UCSC" id="uc009ioy.1">
    <property type="organism name" value="mouse"/>
</dbReference>
<dbReference type="AGR" id="MGI:107545"/>
<dbReference type="CTD" id="11872"/>
<dbReference type="MGI" id="MGI:107545">
    <property type="gene designation" value="Art2b"/>
</dbReference>
<dbReference type="VEuPathDB" id="HostDB:ENSMUSG00000030651"/>
<dbReference type="eggNOG" id="ENOG502QUE9">
    <property type="taxonomic scope" value="Eukaryota"/>
</dbReference>
<dbReference type="GeneTree" id="ENSGT01030000234601"/>
<dbReference type="HOGENOM" id="CLU_059744_4_0_1"/>
<dbReference type="InParanoid" id="O35975"/>
<dbReference type="OMA" id="NFQFKAF"/>
<dbReference type="PhylomeDB" id="O35975"/>
<dbReference type="TreeFam" id="TF335356"/>
<dbReference type="BioGRID-ORCS" id="11872">
    <property type="hits" value="0 hits in 76 CRISPR screens"/>
</dbReference>
<dbReference type="ChiTaRS" id="Art2b">
    <property type="organism name" value="mouse"/>
</dbReference>
<dbReference type="PRO" id="PR:O35975"/>
<dbReference type="Proteomes" id="UP000000589">
    <property type="component" value="Chromosome 7"/>
</dbReference>
<dbReference type="RNAct" id="O35975">
    <property type="molecule type" value="protein"/>
</dbReference>
<dbReference type="Bgee" id="ENSMUSG00000030651">
    <property type="expression patterns" value="Expressed in mesenteric lymph node and 35 other cell types or tissues"/>
</dbReference>
<dbReference type="ExpressionAtlas" id="O35975">
    <property type="expression patterns" value="baseline and differential"/>
</dbReference>
<dbReference type="GO" id="GO:0009897">
    <property type="term" value="C:external side of plasma membrane"/>
    <property type="evidence" value="ECO:0000314"/>
    <property type="project" value="UniProtKB"/>
</dbReference>
<dbReference type="GO" id="GO:0019897">
    <property type="term" value="C:extrinsic component of plasma membrane"/>
    <property type="evidence" value="ECO:0000304"/>
    <property type="project" value="MGI"/>
</dbReference>
<dbReference type="GO" id="GO:0016020">
    <property type="term" value="C:membrane"/>
    <property type="evidence" value="ECO:0000304"/>
    <property type="project" value="MGI"/>
</dbReference>
<dbReference type="GO" id="GO:0016798">
    <property type="term" value="F:hydrolase activity, acting on glycosyl bonds"/>
    <property type="evidence" value="ECO:0000314"/>
    <property type="project" value="UniProtKB"/>
</dbReference>
<dbReference type="GO" id="GO:0003953">
    <property type="term" value="F:NAD+ nucleosidase activity"/>
    <property type="evidence" value="ECO:0007669"/>
    <property type="project" value="UniProtKB-EC"/>
</dbReference>
<dbReference type="GO" id="GO:0106274">
    <property type="term" value="F:NAD+-protein-arginine ADP-ribosyltransferase activity"/>
    <property type="evidence" value="ECO:0000314"/>
    <property type="project" value="UniProtKB"/>
</dbReference>
<dbReference type="GO" id="GO:0016779">
    <property type="term" value="F:nucleotidyltransferase activity"/>
    <property type="evidence" value="ECO:0007669"/>
    <property type="project" value="UniProtKB-KW"/>
</dbReference>
<dbReference type="GO" id="GO:0019677">
    <property type="term" value="P:NAD catabolic process"/>
    <property type="evidence" value="ECO:0000314"/>
    <property type="project" value="UniProtKB"/>
</dbReference>
<dbReference type="FunFam" id="3.90.176.10:FF:000001">
    <property type="entry name" value="NAD(P)(+)--arginine ADP-ribosyltransferase"/>
    <property type="match status" value="1"/>
</dbReference>
<dbReference type="Gene3D" id="3.90.176.10">
    <property type="entry name" value="Toxin ADP-ribosyltransferase, Chain A, domain 1"/>
    <property type="match status" value="1"/>
</dbReference>
<dbReference type="InterPro" id="IPR050999">
    <property type="entry name" value="ADP-ribosyltransferase_ARG"/>
</dbReference>
<dbReference type="InterPro" id="IPR000768">
    <property type="entry name" value="ART"/>
</dbReference>
<dbReference type="PANTHER" id="PTHR10339">
    <property type="entry name" value="ADP-RIBOSYLTRANSFERASE"/>
    <property type="match status" value="1"/>
</dbReference>
<dbReference type="PANTHER" id="PTHR10339:SF24">
    <property type="entry name" value="T-CELL ECTO-ADP-RIBOSYLTRANSFERASE 1-RELATED"/>
    <property type="match status" value="1"/>
</dbReference>
<dbReference type="Pfam" id="PF01129">
    <property type="entry name" value="ART"/>
    <property type="match status" value="1"/>
</dbReference>
<dbReference type="PRINTS" id="PR00970">
    <property type="entry name" value="RIBTRNSFRASE"/>
</dbReference>
<dbReference type="SUPFAM" id="SSF56399">
    <property type="entry name" value="ADP-ribosylation"/>
    <property type="match status" value="1"/>
</dbReference>
<dbReference type="PROSITE" id="PS01291">
    <property type="entry name" value="ART"/>
    <property type="match status" value="1"/>
</dbReference>
<dbReference type="PROSITE" id="PS51996">
    <property type="entry name" value="TR_MART"/>
    <property type="match status" value="1"/>
</dbReference>
<accession>O35975</accession>
<accession>F8VQK8</accession>
<accession>O35702</accession>
<reference key="1">
    <citation type="journal article" date="1996" name="Mol. Immunol.">
        <title>Molecular characterization of mouse T-cell ecto-ADP-ribosyltransferase Rt6: cloning of a second functional gene and identification of the Rt6 gene products.</title>
        <authorList>
            <person name="Hollmann C."/>
            <person name="Haag F."/>
            <person name="Schlott M."/>
            <person name="Damaske A."/>
            <person name="Bertuleit H."/>
            <person name="Matthes M."/>
            <person name="Kuehl M."/>
            <person name="Thiele H.-G."/>
        </authorList>
    </citation>
    <scope>NUCLEOTIDE SEQUENCE [MRNA]</scope>
    <source>
        <strain>BALB/cJ</strain>
        <tissue>Spleen</tissue>
    </source>
</reference>
<reference key="2">
    <citation type="journal article" date="1997" name="J. Immunol.">
        <title>Expression in BALB/c and C57BL/6 mice of Rt6-1 and Rt6-2 ADP-ribosyltransferases that differ in enzymatic activity: C57BL/6 Rt6-1 is a natural transferase knockout.</title>
        <authorList>
            <person name="Kanaitsuka T."/>
            <person name="Bortell R."/>
            <person name="Stevens L.A."/>
            <person name="Moss J."/>
            <person name="Sardinha D."/>
            <person name="Rajan T.V."/>
            <person name="Zipris D."/>
            <person name="Mordes J.P."/>
            <person name="Greiner D.L."/>
            <person name="Rossini A.A."/>
        </authorList>
    </citation>
    <scope>NUCLEOTIDE SEQUENCE [MRNA]</scope>
    <scope>FUNCTION</scope>
    <scope>CATALYTIC ACTIVITY</scope>
    <scope>TISSUE SPECIFICITY</scope>
    <source>
        <strain>BALB/cJ</strain>
        <strain>C57BL/6J</strain>
        <tissue>Spleen</tissue>
    </source>
</reference>
<reference key="3">
    <citation type="journal article" date="2009" name="PLoS Biol.">
        <title>Lineage-specific biology revealed by a finished genome assembly of the mouse.</title>
        <authorList>
            <person name="Church D.M."/>
            <person name="Goodstadt L."/>
            <person name="Hillier L.W."/>
            <person name="Zody M.C."/>
            <person name="Goldstein S."/>
            <person name="She X."/>
            <person name="Bult C.J."/>
            <person name="Agarwala R."/>
            <person name="Cherry J.L."/>
            <person name="DiCuccio M."/>
            <person name="Hlavina W."/>
            <person name="Kapustin Y."/>
            <person name="Meric P."/>
            <person name="Maglott D."/>
            <person name="Birtle Z."/>
            <person name="Marques A.C."/>
            <person name="Graves T."/>
            <person name="Zhou S."/>
            <person name="Teague B."/>
            <person name="Potamousis K."/>
            <person name="Churas C."/>
            <person name="Place M."/>
            <person name="Herschleb J."/>
            <person name="Runnheim R."/>
            <person name="Forrest D."/>
            <person name="Amos-Landgraf J."/>
            <person name="Schwartz D.C."/>
            <person name="Cheng Z."/>
            <person name="Lindblad-Toh K."/>
            <person name="Eichler E.E."/>
            <person name="Ponting C.P."/>
        </authorList>
    </citation>
    <scope>NUCLEOTIDE SEQUENCE [LARGE SCALE GENOMIC DNA]</scope>
    <source>
        <strain>C57BL/6J</strain>
    </source>
</reference>
<reference key="4">
    <citation type="journal article" date="2000" name="J. Biochem.">
        <title>Mouse T-cell antigen rt6.1 has thiol-dependent NAD glycohydrolase activity.</title>
        <authorList>
            <person name="Hara N."/>
            <person name="Terashima M."/>
            <person name="Shimoyama M."/>
            <person name="Tsuchiya M."/>
        </authorList>
    </citation>
    <scope>CATALYTIC ACTIVITY</scope>
    <scope>MUTAGENESIS OF SER-80 AND PHE-201</scope>
</reference>
<reference key="5">
    <citation type="journal article" date="2008" name="FASEB J.">
        <title>ADP-ribosylation at R125 gates the P2X7 ion channel by presenting a covalent ligand to its nucleotide binding site.</title>
        <authorList>
            <person name="Adriouch S."/>
            <person name="Bannas P."/>
            <person name="Schwarz N."/>
            <person name="Fliegert R."/>
            <person name="Guse A.H."/>
            <person name="Seman M."/>
            <person name="Haag F."/>
            <person name="Koch-Nolte F."/>
        </authorList>
    </citation>
    <scope>FUNCTION</scope>
</reference>
<protein>
    <recommendedName>
        <fullName>T-cell ecto-ADP-ribosyltransferase 2</fullName>
        <ecNumber evidence="4 6">2.4.2.31</ecNumber>
    </recommendedName>
    <alternativeName>
        <fullName>ADP-ribosyltransferase C2 and C3 toxin-like 2</fullName>
        <shortName>ARTC2</shortName>
    </alternativeName>
    <alternativeName>
        <fullName>Mono(ADP-ribosyl)transferase 2B</fullName>
    </alternativeName>
    <alternativeName>
        <fullName>NAD(+) glycohydrolase</fullName>
        <ecNumber evidence="4">3.2.2.5</ecNumber>
    </alternativeName>
    <alternativeName>
        <fullName>T-cell NAD(P)(+)--arginine ADP-ribosyltransferase 2</fullName>
    </alternativeName>
    <alternativeName>
        <fullName>T-cell differentiation marker Rt6 homolog 2</fullName>
    </alternativeName>
    <alternativeName>
        <fullName>T-cell mono(ADP-ribosyl)transferase 2</fullName>
    </alternativeName>
</protein>
<gene>
    <name type="primary">Art2b</name>
    <name type="synonym">Rt6-2</name>
    <name type="synonym">Rt6.2</name>
</gene>
<organism>
    <name type="scientific">Mus musculus</name>
    <name type="common">Mouse</name>
    <dbReference type="NCBI Taxonomy" id="10090"/>
    <lineage>
        <taxon>Eukaryota</taxon>
        <taxon>Metazoa</taxon>
        <taxon>Chordata</taxon>
        <taxon>Craniata</taxon>
        <taxon>Vertebrata</taxon>
        <taxon>Euteleostomi</taxon>
        <taxon>Mammalia</taxon>
        <taxon>Eutheria</taxon>
        <taxon>Euarchontoglires</taxon>
        <taxon>Glires</taxon>
        <taxon>Rodentia</taxon>
        <taxon>Myomorpha</taxon>
        <taxon>Muroidea</taxon>
        <taxon>Muridae</taxon>
        <taxon>Murinae</taxon>
        <taxon>Mus</taxon>
        <taxon>Mus</taxon>
    </lineage>
</organism>
<sequence length="289" mass="33124">MTSKIFKFFLTWWLTQQVTGLAVPFMLDMAPNAFDDQYESCVEDMEKKAPQLLQEDFNMNEELKLEWEKAEINWKEIKNSTSYPAGFHDFHGTALVAYTGNLAIDFNRAVRDFKKSPDNFHYKAFHYYLTRAVQLLNDQGCSLVYRGTKVMFEYTGKGSVRFGQFSSSSLTKRVALSSNFFSNHGTLFIIRTCLGVNIKEFSSFPREEEVLIPGYEVYHKVTAQNDNGYNEIFLDSPERKKSNFNCFYNGSAQTVNIDFSISGSRESCVSLFLVVLLGLLVQQLTLAEL</sequence>
<keyword id="KW-1003">Cell membrane</keyword>
<keyword id="KW-1015">Disulfide bond</keyword>
<keyword id="KW-0325">Glycoprotein</keyword>
<keyword id="KW-0328">Glycosyltransferase</keyword>
<keyword id="KW-0336">GPI-anchor</keyword>
<keyword id="KW-0378">Hydrolase</keyword>
<keyword id="KW-0449">Lipoprotein</keyword>
<keyword id="KW-0472">Membrane</keyword>
<keyword id="KW-0520">NAD</keyword>
<keyword id="KW-0521">NADP</keyword>
<keyword id="KW-0548">Nucleotidyltransferase</keyword>
<keyword id="KW-1185">Reference proteome</keyword>
<keyword id="KW-0732">Signal</keyword>
<keyword id="KW-0808">Transferase</keyword>